<reference key="1">
    <citation type="journal article" date="2006" name="J. Bacteriol.">
        <title>Whole-genome sequence of Listeria welshimeri reveals common steps in genome reduction with Listeria innocua as compared to Listeria monocytogenes.</title>
        <authorList>
            <person name="Hain T."/>
            <person name="Steinweg C."/>
            <person name="Kuenne C.T."/>
            <person name="Billion A."/>
            <person name="Ghai R."/>
            <person name="Chatterjee S.S."/>
            <person name="Domann E."/>
            <person name="Kaerst U."/>
            <person name="Goesmann A."/>
            <person name="Bekel T."/>
            <person name="Bartels D."/>
            <person name="Kaiser O."/>
            <person name="Meyer F."/>
            <person name="Puehler A."/>
            <person name="Weisshaar B."/>
            <person name="Wehland J."/>
            <person name="Liang C."/>
            <person name="Dandekar T."/>
            <person name="Lampidis R."/>
            <person name="Kreft J."/>
            <person name="Goebel W."/>
            <person name="Chakraborty T."/>
        </authorList>
    </citation>
    <scope>NUCLEOTIDE SEQUENCE [LARGE SCALE GENOMIC DNA]</scope>
    <source>
        <strain>ATCC 35897 / DSM 20650 / CCUG 15529 / CIP 8149 / NCTC 11857 / SLCC 5334 / V8</strain>
    </source>
</reference>
<comment type="function">
    <text evidence="1">Catalyzes the reversible formation of acyl-phosphate (acyl-PO(4)) from acyl-[acyl-carrier-protein] (acyl-ACP). This enzyme utilizes acyl-ACP as fatty acyl donor, but not acyl-CoA.</text>
</comment>
<comment type="catalytic activity">
    <reaction evidence="1">
        <text>a fatty acyl-[ACP] + phosphate = an acyl phosphate + holo-[ACP]</text>
        <dbReference type="Rhea" id="RHEA:42292"/>
        <dbReference type="Rhea" id="RHEA-COMP:9685"/>
        <dbReference type="Rhea" id="RHEA-COMP:14125"/>
        <dbReference type="ChEBI" id="CHEBI:43474"/>
        <dbReference type="ChEBI" id="CHEBI:59918"/>
        <dbReference type="ChEBI" id="CHEBI:64479"/>
        <dbReference type="ChEBI" id="CHEBI:138651"/>
        <dbReference type="EC" id="2.3.1.274"/>
    </reaction>
</comment>
<comment type="pathway">
    <text evidence="1">Lipid metabolism; phospholipid metabolism.</text>
</comment>
<comment type="subunit">
    <text evidence="1">Homodimer. Probably interacts with PlsY.</text>
</comment>
<comment type="subcellular location">
    <subcellularLocation>
        <location evidence="1">Cytoplasm</location>
    </subcellularLocation>
    <text evidence="1">Associated with the membrane possibly through PlsY.</text>
</comment>
<comment type="similarity">
    <text evidence="1">Belongs to the PlsX family.</text>
</comment>
<protein>
    <recommendedName>
        <fullName evidence="1">Phosphate acyltransferase</fullName>
        <ecNumber evidence="1">2.3.1.274</ecNumber>
    </recommendedName>
    <alternativeName>
        <fullName evidence="1">Acyl-ACP phosphotransacylase</fullName>
    </alternativeName>
    <alternativeName>
        <fullName evidence="1">Acyl-[acyl-carrier-protein]--phosphate acyltransferase</fullName>
    </alternativeName>
    <alternativeName>
        <fullName evidence="1">Phosphate-acyl-ACP acyltransferase</fullName>
    </alternativeName>
</protein>
<keyword id="KW-0963">Cytoplasm</keyword>
<keyword id="KW-0444">Lipid biosynthesis</keyword>
<keyword id="KW-0443">Lipid metabolism</keyword>
<keyword id="KW-0594">Phospholipid biosynthesis</keyword>
<keyword id="KW-1208">Phospholipid metabolism</keyword>
<keyword id="KW-0808">Transferase</keyword>
<feature type="chain" id="PRO_1000001784" description="Phosphate acyltransferase">
    <location>
        <begin position="1"/>
        <end position="337"/>
    </location>
</feature>
<name>PLSX_LISW6</name>
<organism>
    <name type="scientific">Listeria welshimeri serovar 6b (strain ATCC 35897 / DSM 20650 / CCUG 15529 / CIP 8149 / NCTC 11857 / SLCC 5334 / V8)</name>
    <dbReference type="NCBI Taxonomy" id="386043"/>
    <lineage>
        <taxon>Bacteria</taxon>
        <taxon>Bacillati</taxon>
        <taxon>Bacillota</taxon>
        <taxon>Bacilli</taxon>
        <taxon>Bacillales</taxon>
        <taxon>Listeriaceae</taxon>
        <taxon>Listeria</taxon>
    </lineage>
</organism>
<dbReference type="EC" id="2.3.1.274" evidence="1"/>
<dbReference type="EMBL" id="AM263198">
    <property type="protein sequence ID" value="CAK21246.1"/>
    <property type="molecule type" value="Genomic_DNA"/>
</dbReference>
<dbReference type="RefSeq" id="WP_011702600.1">
    <property type="nucleotide sequence ID" value="NC_008555.1"/>
</dbReference>
<dbReference type="SMR" id="A0AJR4"/>
<dbReference type="STRING" id="386043.lwe1828"/>
<dbReference type="GeneID" id="61189729"/>
<dbReference type="KEGG" id="lwe:lwe1828"/>
<dbReference type="eggNOG" id="COG0416">
    <property type="taxonomic scope" value="Bacteria"/>
</dbReference>
<dbReference type="HOGENOM" id="CLU_039379_1_1_9"/>
<dbReference type="OrthoDB" id="9806408at2"/>
<dbReference type="UniPathway" id="UPA00085"/>
<dbReference type="Proteomes" id="UP000000779">
    <property type="component" value="Chromosome"/>
</dbReference>
<dbReference type="GO" id="GO:0005737">
    <property type="term" value="C:cytoplasm"/>
    <property type="evidence" value="ECO:0007669"/>
    <property type="project" value="UniProtKB-SubCell"/>
</dbReference>
<dbReference type="GO" id="GO:0043811">
    <property type="term" value="F:phosphate:acyl-[acyl carrier protein] acyltransferase activity"/>
    <property type="evidence" value="ECO:0007669"/>
    <property type="project" value="UniProtKB-UniRule"/>
</dbReference>
<dbReference type="GO" id="GO:0006633">
    <property type="term" value="P:fatty acid biosynthetic process"/>
    <property type="evidence" value="ECO:0007669"/>
    <property type="project" value="UniProtKB-UniRule"/>
</dbReference>
<dbReference type="GO" id="GO:0008654">
    <property type="term" value="P:phospholipid biosynthetic process"/>
    <property type="evidence" value="ECO:0007669"/>
    <property type="project" value="UniProtKB-KW"/>
</dbReference>
<dbReference type="Gene3D" id="3.40.718.10">
    <property type="entry name" value="Isopropylmalate Dehydrogenase"/>
    <property type="match status" value="1"/>
</dbReference>
<dbReference type="HAMAP" id="MF_00019">
    <property type="entry name" value="PlsX"/>
    <property type="match status" value="1"/>
</dbReference>
<dbReference type="InterPro" id="IPR003664">
    <property type="entry name" value="FA_synthesis"/>
</dbReference>
<dbReference type="InterPro" id="IPR012281">
    <property type="entry name" value="Phospholipid_synth_PlsX-like"/>
</dbReference>
<dbReference type="NCBIfam" id="TIGR00182">
    <property type="entry name" value="plsX"/>
    <property type="match status" value="1"/>
</dbReference>
<dbReference type="PANTHER" id="PTHR30100">
    <property type="entry name" value="FATTY ACID/PHOSPHOLIPID SYNTHESIS PROTEIN PLSX"/>
    <property type="match status" value="1"/>
</dbReference>
<dbReference type="PANTHER" id="PTHR30100:SF1">
    <property type="entry name" value="PHOSPHATE ACYLTRANSFERASE"/>
    <property type="match status" value="1"/>
</dbReference>
<dbReference type="Pfam" id="PF02504">
    <property type="entry name" value="FA_synthesis"/>
    <property type="match status" value="1"/>
</dbReference>
<dbReference type="PIRSF" id="PIRSF002465">
    <property type="entry name" value="Phsphlp_syn_PlsX"/>
    <property type="match status" value="1"/>
</dbReference>
<dbReference type="SUPFAM" id="SSF53659">
    <property type="entry name" value="Isocitrate/Isopropylmalate dehydrogenase-like"/>
    <property type="match status" value="1"/>
</dbReference>
<evidence type="ECO:0000255" key="1">
    <source>
        <dbReference type="HAMAP-Rule" id="MF_00019"/>
    </source>
</evidence>
<gene>
    <name evidence="1" type="primary">plsX</name>
    <name type="ordered locus">lwe1828</name>
</gene>
<proteinExistence type="inferred from homology"/>
<sequence length="337" mass="36463">MKIAVDAMGGDHAPKEIVLGVMKAVAQYKDIEILLFGDETKINEYLTDKTRVKIIHTDEKIESDDEPVRAVKRKKKASMVLAAQAVKDGEADACISAGNTGALMSTGLFVIGRIKGIDRPALAPTLPTVTGKGFVMLDLGANAEAKPEHLLQFGLMGSVYAEKVRKIDRPRVALLNIGTEETKGNDLTKKSFELMKNQDAYEFIGNIEARDLLMDVADVVVTDGFTGNMVLKSIEGTGAAFLSMLKMSLLNGFKNKVAASFLKKDLMELKAKMDYSEYGGACLFGVQAPVVKAHGSSNANGIFTTIRQVREMVEKQVVETIKAEVDKVKVGGTEAND</sequence>
<accession>A0AJR4</accession>